<reference key="1">
    <citation type="journal article" date="1994" name="J. Biol. Chem.">
        <title>Molecular characterization of 4-hydroxyphenylacetate 3-hydroxylase of Escherichia coli. A two-protein component enzyme.</title>
        <authorList>
            <person name="Prieto M.A."/>
            <person name="Garcia J.L."/>
        </authorList>
    </citation>
    <scope>NUCLEOTIDE SEQUENCE [GENOMIC DNA]</scope>
    <source>
        <strain>W / ATCC 11105 / DSM 1900 / 113-3</strain>
    </source>
</reference>
<reference key="2">
    <citation type="journal article" date="1996" name="J. Bacteriol.">
        <title>Molecular characterization of the 4-hydroxyphenylacetate catabolic pathway of Escherichia coli W: engineering a mobile aromatic degradative cluster.</title>
        <authorList>
            <person name="Prieto M.A."/>
            <person name="Diaz E."/>
            <person name="Garcia J.L."/>
        </authorList>
    </citation>
    <scope>NUCLEOTIDE SEQUENCE [GENOMIC DNA]</scope>
    <source>
        <strain>W / ATCC 11105 / DSM 1900 / 113-3</strain>
    </source>
</reference>
<reference key="3">
    <citation type="submission" date="2000-03" db="EMBL/GenBank/DDBJ databases">
        <authorList>
            <person name="Prieto M.A."/>
        </authorList>
    </citation>
    <scope>SEQUENCE REVISION</scope>
    <source>
        <strain>W / ATCC 11105 / DSM 1900 / 113-3</strain>
    </source>
</reference>
<reference key="4">
    <citation type="journal article" date="2000" name="J. Bacteriol.">
        <title>Functional analysis of the small component of the 4-hydroxyphenylacetate 3-monooxygenase of Escherichia coli W: a prototype of a new flavin:NAD(P)H reductase subfamily.</title>
        <authorList>
            <person name="Galan B."/>
            <person name="Diaz E."/>
            <person name="Prieto M.A."/>
            <person name="Garcia J.L."/>
        </authorList>
    </citation>
    <scope>PROTEIN SEQUENCE OF 1-5</scope>
    <scope>CHARACTERIZATION</scope>
</reference>
<name>HPAC_ECOLX</name>
<keyword id="KW-0058">Aromatic hydrocarbons catabolism</keyword>
<keyword id="KW-0903">Direct protein sequencing</keyword>
<keyword id="KW-0285">Flavoprotein</keyword>
<keyword id="KW-0288">FMN</keyword>
<keyword id="KW-0520">NAD</keyword>
<keyword id="KW-0560">Oxidoreductase</keyword>
<dbReference type="EC" id="1.5.1.36"/>
<dbReference type="EMBL" id="Z29081">
    <property type="protein sequence ID" value="CAA82322.2"/>
    <property type="molecule type" value="Genomic_DNA"/>
</dbReference>
<dbReference type="EMBL" id="Z37980">
    <property type="protein sequence ID" value="CAA86049.2"/>
    <property type="molecule type" value="Genomic_DNA"/>
</dbReference>
<dbReference type="PIR" id="C55349">
    <property type="entry name" value="C55349"/>
</dbReference>
<dbReference type="RefSeq" id="WP_001175455.1">
    <property type="nucleotide sequence ID" value="NZ_WXZA01000002.1"/>
</dbReference>
<dbReference type="SMR" id="Q57501"/>
<dbReference type="STRING" id="585034.ECIAI1_4566"/>
<dbReference type="eggNOG" id="COG1853">
    <property type="taxonomic scope" value="Bacteria"/>
</dbReference>
<dbReference type="OMA" id="VCINRNS"/>
<dbReference type="BioCyc" id="MetaCyc:MONOMER-2842"/>
<dbReference type="BRENDA" id="1.5.1.36">
    <property type="organism ID" value="2168"/>
</dbReference>
<dbReference type="SABIO-RK" id="Q57501"/>
<dbReference type="UniPathway" id="UPA00208">
    <property type="reaction ID" value="UER00416"/>
</dbReference>
<dbReference type="GO" id="GO:0036382">
    <property type="term" value="F:flavin reductase (NADH) activity"/>
    <property type="evidence" value="ECO:0007669"/>
    <property type="project" value="UniProtKB-EC"/>
</dbReference>
<dbReference type="GO" id="GO:0010181">
    <property type="term" value="F:FMN binding"/>
    <property type="evidence" value="ECO:0007669"/>
    <property type="project" value="InterPro"/>
</dbReference>
<dbReference type="GO" id="GO:0051287">
    <property type="term" value="F:NAD binding"/>
    <property type="evidence" value="ECO:0007669"/>
    <property type="project" value="InterPro"/>
</dbReference>
<dbReference type="GO" id="GO:0016651">
    <property type="term" value="F:oxidoreductase activity, acting on NAD(P)H"/>
    <property type="evidence" value="ECO:0007669"/>
    <property type="project" value="InterPro"/>
</dbReference>
<dbReference type="GO" id="GO:0042602">
    <property type="term" value="F:riboflavin reductase (NADPH) activity"/>
    <property type="evidence" value="ECO:0007669"/>
    <property type="project" value="TreeGrafter"/>
</dbReference>
<dbReference type="GO" id="GO:0042537">
    <property type="term" value="P:benzene-containing compound metabolic process"/>
    <property type="evidence" value="ECO:0007669"/>
    <property type="project" value="InterPro"/>
</dbReference>
<dbReference type="GO" id="GO:0006208">
    <property type="term" value="P:pyrimidine nucleobase catabolic process"/>
    <property type="evidence" value="ECO:0007669"/>
    <property type="project" value="TreeGrafter"/>
</dbReference>
<dbReference type="FunFam" id="2.30.110.10:FF:000002">
    <property type="entry name" value="FMN reductase (NADH) RutF"/>
    <property type="match status" value="1"/>
</dbReference>
<dbReference type="Gene3D" id="2.30.110.10">
    <property type="entry name" value="Electron Transport, Fmn-binding Protein, Chain A"/>
    <property type="match status" value="1"/>
</dbReference>
<dbReference type="InterPro" id="IPR002563">
    <property type="entry name" value="Flavin_Rdtase-like_dom"/>
</dbReference>
<dbReference type="InterPro" id="IPR011982">
    <property type="entry name" value="HPA_mOase_red"/>
</dbReference>
<dbReference type="InterPro" id="IPR050268">
    <property type="entry name" value="NADH-dep_flavin_reductase"/>
</dbReference>
<dbReference type="InterPro" id="IPR012349">
    <property type="entry name" value="Split_barrel_FMN-bd"/>
</dbReference>
<dbReference type="NCBIfam" id="TIGR02296">
    <property type="entry name" value="HpaC"/>
    <property type="match status" value="1"/>
</dbReference>
<dbReference type="NCBIfam" id="NF012030">
    <property type="entry name" value="PRK15486.1"/>
    <property type="match status" value="1"/>
</dbReference>
<dbReference type="PANTHER" id="PTHR30466">
    <property type="entry name" value="FLAVIN REDUCTASE"/>
    <property type="match status" value="1"/>
</dbReference>
<dbReference type="PANTHER" id="PTHR30466:SF1">
    <property type="entry name" value="FMN REDUCTASE (NADH) RUTF"/>
    <property type="match status" value="1"/>
</dbReference>
<dbReference type="Pfam" id="PF01613">
    <property type="entry name" value="Flavin_Reduct"/>
    <property type="match status" value="1"/>
</dbReference>
<dbReference type="SMART" id="SM00903">
    <property type="entry name" value="Flavin_Reduct"/>
    <property type="match status" value="1"/>
</dbReference>
<dbReference type="SUPFAM" id="SSF50475">
    <property type="entry name" value="FMN-binding split barrel"/>
    <property type="match status" value="1"/>
</dbReference>
<comment type="function">
    <text>Catalyzes the reduction of free flavins (FMN, FAD and riboflavin) by NADH. Subsequently, the reduced flavins diffuse to the large HpaB component or to other electron acceptors such as cytochrome c and Fe(3+) ion.</text>
</comment>
<comment type="catalytic activity">
    <reaction>
        <text>a reduced flavin + NAD(+) = an oxidized flavin + NADH + 2 H(+)</text>
        <dbReference type="Rhea" id="RHEA:31303"/>
        <dbReference type="ChEBI" id="CHEBI:15378"/>
        <dbReference type="ChEBI" id="CHEBI:57540"/>
        <dbReference type="ChEBI" id="CHEBI:57945"/>
        <dbReference type="ChEBI" id="CHEBI:60531"/>
        <dbReference type="ChEBI" id="CHEBI:62787"/>
        <dbReference type="EC" id="1.5.1.36"/>
    </reaction>
</comment>
<comment type="pathway">
    <text>Aromatic compound metabolism; 4-hydroxyphenylacetate degradation; pyruvate and succinate semialdehyde from 4-hydroxyphenylacetate: step 1/7.</text>
</comment>
<comment type="subunit">
    <text evidence="1">Homodimer (Probable). 4-HPA 3-monooxygenase consists of a reductase component HpaC and an oxygenase component HpaB.</text>
</comment>
<comment type="induction">
    <text>By 4-hydroxyphenylacetic acid.</text>
</comment>
<comment type="similarity">
    <text evidence="1">Belongs to the non-flavoprotein flavin reductase family. HpaC subfamily.</text>
</comment>
<evidence type="ECO:0000305" key="1"/>
<protein>
    <recommendedName>
        <fullName>4-hydroxyphenylacetate 3-monooxygenase reductase component</fullName>
        <ecNumber>1.5.1.36</ecNumber>
    </recommendedName>
    <alternativeName>
        <fullName>4-HPA 3-monooxygenase small component</fullName>
    </alternativeName>
    <alternativeName>
        <fullName>Flavin:NADH reductase</fullName>
    </alternativeName>
</protein>
<organism>
    <name type="scientific">Escherichia coli</name>
    <dbReference type="NCBI Taxonomy" id="562"/>
    <lineage>
        <taxon>Bacteria</taxon>
        <taxon>Pseudomonadati</taxon>
        <taxon>Pseudomonadota</taxon>
        <taxon>Gammaproteobacteria</taxon>
        <taxon>Enterobacterales</taxon>
        <taxon>Enterobacteriaceae</taxon>
        <taxon>Escherichia</taxon>
    </lineage>
</organism>
<gene>
    <name type="primary">hpaC</name>
</gene>
<proteinExistence type="evidence at protein level"/>
<feature type="chain" id="PRO_0000085532" description="4-hydroxyphenylacetate 3-monooxygenase reductase component">
    <location>
        <begin position="1"/>
        <end position="170"/>
    </location>
</feature>
<sequence>MQLDEQRLRFRDAMASLSAAVNIITTEGDAGQCGITATAVCSVTDTPPSLMVCINANSAMNPVFQGNGKLCVNVLNHEQELMARHFAGMTGMAMEERFSLSCWQKGPLAQPVLKGSLASLEGEIRDVQAIGTHLVYLVEIKNIILSAEGHGLIYFKRRFHPVMLEMEAAI</sequence>
<accession>Q57501</accession>